<comment type="subunit">
    <text>The basal body constitutes a major portion of the flagellar organelle and consists of five rings (E,L,P,S, and M) mounted on a central rod.</text>
</comment>
<comment type="subcellular location">
    <subcellularLocation>
        <location evidence="1">Bacterial flagellum basal body</location>
    </subcellularLocation>
</comment>
<evidence type="ECO:0000305" key="1"/>
<gene>
    <name type="primary">flbY</name>
    <name type="ordered locus">CC_2584</name>
</gene>
<organism>
    <name type="scientific">Caulobacter vibrioides (strain ATCC 19089 / CIP 103742 / CB 15)</name>
    <name type="common">Caulobacter crescentus</name>
    <dbReference type="NCBI Taxonomy" id="190650"/>
    <lineage>
        <taxon>Bacteria</taxon>
        <taxon>Pseudomonadati</taxon>
        <taxon>Pseudomonadota</taxon>
        <taxon>Alphaproteobacteria</taxon>
        <taxon>Caulobacterales</taxon>
        <taxon>Caulobacteraceae</taxon>
        <taxon>Caulobacter</taxon>
    </lineage>
</organism>
<name>FLBY_CAUVC</name>
<keyword id="KW-0975">Bacterial flagellum</keyword>
<keyword id="KW-1185">Reference proteome</keyword>
<reference key="1">
    <citation type="journal article" date="2001" name="Proc. Natl. Acad. Sci. U.S.A.">
        <title>Complete genome sequence of Caulobacter crescentus.</title>
        <authorList>
            <person name="Nierman W.C."/>
            <person name="Feldblyum T.V."/>
            <person name="Laub M.T."/>
            <person name="Paulsen I.T."/>
            <person name="Nelson K.E."/>
            <person name="Eisen J.A."/>
            <person name="Heidelberg J.F."/>
            <person name="Alley M.R.K."/>
            <person name="Ohta N."/>
            <person name="Maddock J.R."/>
            <person name="Potocka I."/>
            <person name="Nelson W.C."/>
            <person name="Newton A."/>
            <person name="Stephens C."/>
            <person name="Phadke N.D."/>
            <person name="Ely B."/>
            <person name="DeBoy R.T."/>
            <person name="Dodson R.J."/>
            <person name="Durkin A.S."/>
            <person name="Gwinn M.L."/>
            <person name="Haft D.H."/>
            <person name="Kolonay J.F."/>
            <person name="Smit J."/>
            <person name="Craven M.B."/>
            <person name="Khouri H.M."/>
            <person name="Shetty J."/>
            <person name="Berry K.J."/>
            <person name="Utterback T.R."/>
            <person name="Tran K."/>
            <person name="Wolf A.M."/>
            <person name="Vamathevan J.J."/>
            <person name="Ermolaeva M.D."/>
            <person name="White O."/>
            <person name="Salzberg S.L."/>
            <person name="Venter J.C."/>
            <person name="Shapiro L."/>
            <person name="Fraser C.M."/>
        </authorList>
    </citation>
    <scope>NUCLEOTIDE SEQUENCE [LARGE SCALE GENOMIC DNA]</scope>
    <source>
        <strain>ATCC 19089 / CIP 103742 / CB 15</strain>
    </source>
</reference>
<reference key="2">
    <citation type="journal article" date="1992" name="J. Bacteriol.">
        <title>Molecular genetics of the flgI region and its role in flagellum biosynthesis in Caulobacter crescentus.</title>
        <authorList>
            <person name="Khambaty F.M."/>
            <person name="Ely B."/>
        </authorList>
    </citation>
    <scope>NUCLEOTIDE SEQUENCE [GENOMIC DNA] OF 1-63</scope>
    <source>
        <strain>ATCC 19089 / CIP 103742 / CB 15</strain>
    </source>
</reference>
<dbReference type="EMBL" id="AE005673">
    <property type="protein sequence ID" value="AAK24554.1"/>
    <property type="molecule type" value="Genomic_DNA"/>
</dbReference>
<dbReference type="EMBL" id="M91448">
    <property type="protein sequence ID" value="AAB83952.1"/>
    <property type="molecule type" value="Genomic_DNA"/>
</dbReference>
<dbReference type="PIR" id="C41891">
    <property type="entry name" value="C41891"/>
</dbReference>
<dbReference type="PIR" id="F87569">
    <property type="entry name" value="F87569"/>
</dbReference>
<dbReference type="RefSeq" id="NP_421386.1">
    <property type="nucleotide sequence ID" value="NC_002696.2"/>
</dbReference>
<dbReference type="RefSeq" id="WP_010920440.1">
    <property type="nucleotide sequence ID" value="NC_002696.2"/>
</dbReference>
<dbReference type="SMR" id="P33977"/>
<dbReference type="STRING" id="190650.CC_2584"/>
<dbReference type="EnsemblBacteria" id="AAK24554">
    <property type="protein sequence ID" value="AAK24554"/>
    <property type="gene ID" value="CC_2584"/>
</dbReference>
<dbReference type="KEGG" id="ccr:CC_2584"/>
<dbReference type="PATRIC" id="fig|190650.5.peg.2598"/>
<dbReference type="eggNOG" id="ENOG5032W8K">
    <property type="taxonomic scope" value="Bacteria"/>
</dbReference>
<dbReference type="HOGENOM" id="CLU_146656_0_0_5"/>
<dbReference type="BioCyc" id="CAULO:CC2584-MONOMER"/>
<dbReference type="Proteomes" id="UP000001816">
    <property type="component" value="Chromosome"/>
</dbReference>
<dbReference type="GO" id="GO:0009425">
    <property type="term" value="C:bacterial-type flagellum basal body"/>
    <property type="evidence" value="ECO:0007669"/>
    <property type="project" value="UniProtKB-SubCell"/>
</dbReference>
<feature type="chain" id="PRO_0000180857" description="Flagellar basal-body protein FlbY">
    <location>
        <begin position="1"/>
        <end position="149"/>
    </location>
</feature>
<protein>
    <recommendedName>
        <fullName>Flagellar basal-body protein FlbY</fullName>
    </recommendedName>
</protein>
<accession>P33977</accession>
<proteinExistence type="predicted"/>
<sequence length="149" mass="16317">MAIAAVDANDRVHQLILLTERLTDLIAKQAVAFETHRPHQAAQYVEETSKLANLYRHESMRVRANVGLVESARLELRQRLMRATEAFDAVLARQSRAVEAAKIVTEGLVHAIAQEVASQRAAPATTYGAGGMVNDRPQHGAAITLNRKA</sequence>